<evidence type="ECO:0000255" key="1">
    <source>
        <dbReference type="HAMAP-Rule" id="MF_00002"/>
    </source>
</evidence>
<accession>Q8A9S4</accession>
<feature type="chain" id="PRO_0000142296" description="Aspartate carbamoyltransferase regulatory chain">
    <location>
        <begin position="1"/>
        <end position="153"/>
    </location>
</feature>
<feature type="binding site" evidence="1">
    <location>
        <position position="110"/>
    </location>
    <ligand>
        <name>Zn(2+)</name>
        <dbReference type="ChEBI" id="CHEBI:29105"/>
    </ligand>
</feature>
<feature type="binding site" evidence="1">
    <location>
        <position position="115"/>
    </location>
    <ligand>
        <name>Zn(2+)</name>
        <dbReference type="ChEBI" id="CHEBI:29105"/>
    </ligand>
</feature>
<feature type="binding site" evidence="1">
    <location>
        <position position="138"/>
    </location>
    <ligand>
        <name>Zn(2+)</name>
        <dbReference type="ChEBI" id="CHEBI:29105"/>
    </ligand>
</feature>
<feature type="binding site" evidence="1">
    <location>
        <position position="141"/>
    </location>
    <ligand>
        <name>Zn(2+)</name>
        <dbReference type="ChEBI" id="CHEBI:29105"/>
    </ligand>
</feature>
<name>PYRI_BACTN</name>
<keyword id="KW-0479">Metal-binding</keyword>
<keyword id="KW-0665">Pyrimidine biosynthesis</keyword>
<keyword id="KW-1185">Reference proteome</keyword>
<keyword id="KW-0862">Zinc</keyword>
<reference key="1">
    <citation type="journal article" date="2003" name="Science">
        <title>A genomic view of the human-Bacteroides thetaiotaomicron symbiosis.</title>
        <authorList>
            <person name="Xu J."/>
            <person name="Bjursell M.K."/>
            <person name="Himrod J."/>
            <person name="Deng S."/>
            <person name="Carmichael L.K."/>
            <person name="Chiang H.C."/>
            <person name="Hooper L.V."/>
            <person name="Gordon J.I."/>
        </authorList>
    </citation>
    <scope>NUCLEOTIDE SEQUENCE [LARGE SCALE GENOMIC DNA]</scope>
    <source>
        <strain>ATCC 29148 / DSM 2079 / JCM 5827 / CCUG 10774 / NCTC 10582 / VPI-5482 / E50</strain>
    </source>
</reference>
<gene>
    <name evidence="1" type="primary">pyrI</name>
    <name type="ordered locus">BT_0741</name>
</gene>
<protein>
    <recommendedName>
        <fullName evidence="1">Aspartate carbamoyltransferase regulatory chain</fullName>
    </recommendedName>
</protein>
<proteinExistence type="inferred from homology"/>
<comment type="function">
    <text evidence="1">Involved in allosteric regulation of aspartate carbamoyltransferase.</text>
</comment>
<comment type="cofactor">
    <cofactor evidence="1">
        <name>Zn(2+)</name>
        <dbReference type="ChEBI" id="CHEBI:29105"/>
    </cofactor>
    <text evidence="1">Binds 1 zinc ion per subunit.</text>
</comment>
<comment type="subunit">
    <text evidence="1">Contains catalytic and regulatory chains.</text>
</comment>
<comment type="similarity">
    <text evidence="1">Belongs to the PyrI family.</text>
</comment>
<dbReference type="EMBL" id="AE015928">
    <property type="protein sequence ID" value="AAO75848.1"/>
    <property type="molecule type" value="Genomic_DNA"/>
</dbReference>
<dbReference type="RefSeq" id="NP_809654.1">
    <property type="nucleotide sequence ID" value="NC_004663.1"/>
</dbReference>
<dbReference type="RefSeq" id="WP_008761415.1">
    <property type="nucleotide sequence ID" value="NZ_UYXG01000002.1"/>
</dbReference>
<dbReference type="SMR" id="Q8A9S4"/>
<dbReference type="FunCoup" id="Q8A9S4">
    <property type="interactions" value="120"/>
</dbReference>
<dbReference type="STRING" id="226186.BT_0741"/>
<dbReference type="PaxDb" id="226186-BT_0741"/>
<dbReference type="EnsemblBacteria" id="AAO75848">
    <property type="protein sequence ID" value="AAO75848"/>
    <property type="gene ID" value="BT_0741"/>
</dbReference>
<dbReference type="GeneID" id="60926709"/>
<dbReference type="KEGG" id="bth:BT_0741"/>
<dbReference type="PATRIC" id="fig|226186.12.peg.756"/>
<dbReference type="eggNOG" id="COG1781">
    <property type="taxonomic scope" value="Bacteria"/>
</dbReference>
<dbReference type="HOGENOM" id="CLU_128576_0_0_10"/>
<dbReference type="InParanoid" id="Q8A9S4"/>
<dbReference type="OrthoDB" id="5599321at2"/>
<dbReference type="Proteomes" id="UP000001414">
    <property type="component" value="Chromosome"/>
</dbReference>
<dbReference type="GO" id="GO:0009347">
    <property type="term" value="C:aspartate carbamoyltransferase complex"/>
    <property type="evidence" value="ECO:0000318"/>
    <property type="project" value="GO_Central"/>
</dbReference>
<dbReference type="GO" id="GO:0046872">
    <property type="term" value="F:metal ion binding"/>
    <property type="evidence" value="ECO:0007669"/>
    <property type="project" value="UniProtKB-KW"/>
</dbReference>
<dbReference type="GO" id="GO:0006207">
    <property type="term" value="P:'de novo' pyrimidine nucleobase biosynthetic process"/>
    <property type="evidence" value="ECO:0000318"/>
    <property type="project" value="GO_Central"/>
</dbReference>
<dbReference type="GO" id="GO:0006221">
    <property type="term" value="P:pyrimidine nucleotide biosynthetic process"/>
    <property type="evidence" value="ECO:0007669"/>
    <property type="project" value="UniProtKB-UniRule"/>
</dbReference>
<dbReference type="Gene3D" id="2.30.30.20">
    <property type="entry name" value="Aspartate carbamoyltransferase regulatory subunit, C-terminal domain"/>
    <property type="match status" value="1"/>
</dbReference>
<dbReference type="Gene3D" id="3.30.70.140">
    <property type="entry name" value="Aspartate carbamoyltransferase regulatory subunit, N-terminal domain"/>
    <property type="match status" value="1"/>
</dbReference>
<dbReference type="HAMAP" id="MF_00002">
    <property type="entry name" value="Asp_carb_tr_reg"/>
    <property type="match status" value="1"/>
</dbReference>
<dbReference type="InterPro" id="IPR020545">
    <property type="entry name" value="Asp_carbamoyltransf_reg_N"/>
</dbReference>
<dbReference type="InterPro" id="IPR002801">
    <property type="entry name" value="Asp_carbamoylTrfase_reg"/>
</dbReference>
<dbReference type="InterPro" id="IPR020542">
    <property type="entry name" value="Asp_carbamoyltrfase_reg_C"/>
</dbReference>
<dbReference type="InterPro" id="IPR036792">
    <property type="entry name" value="Asp_carbatrfase_reg_C_sf"/>
</dbReference>
<dbReference type="InterPro" id="IPR036793">
    <property type="entry name" value="Asp_carbatrfase_reg_N_sf"/>
</dbReference>
<dbReference type="NCBIfam" id="TIGR00240">
    <property type="entry name" value="ATCase_reg"/>
    <property type="match status" value="1"/>
</dbReference>
<dbReference type="PANTHER" id="PTHR35805">
    <property type="entry name" value="ASPARTATE CARBAMOYLTRANSFERASE REGULATORY CHAIN"/>
    <property type="match status" value="1"/>
</dbReference>
<dbReference type="PANTHER" id="PTHR35805:SF1">
    <property type="entry name" value="ASPARTATE CARBAMOYLTRANSFERASE REGULATORY CHAIN"/>
    <property type="match status" value="1"/>
</dbReference>
<dbReference type="Pfam" id="PF01948">
    <property type="entry name" value="PyrI"/>
    <property type="match status" value="1"/>
</dbReference>
<dbReference type="Pfam" id="PF02748">
    <property type="entry name" value="PyrI_C"/>
    <property type="match status" value="1"/>
</dbReference>
<dbReference type="SUPFAM" id="SSF57825">
    <property type="entry name" value="Aspartate carbamoyltransferase, Regulatory-chain, C-terminal domain"/>
    <property type="match status" value="1"/>
</dbReference>
<dbReference type="SUPFAM" id="SSF54893">
    <property type="entry name" value="Aspartate carbamoyltransferase, Regulatory-chain, N-terminal domain"/>
    <property type="match status" value="1"/>
</dbReference>
<sequence>MSENKQALQVAALKNGTVIDHIPSEKLFTVVQLLGVEQMKCNITIGFNLDSKKLGKKGIIKIADKFFCDEEINRISVVAPYVKLNIIRDYEVVEKKEVRMPDELHGIVKCANPKCITNNEPMPTLFHVIDKDNCIVKCHYCEKEQKREEITIL</sequence>
<organism>
    <name type="scientific">Bacteroides thetaiotaomicron (strain ATCC 29148 / DSM 2079 / JCM 5827 / CCUG 10774 / NCTC 10582 / VPI-5482 / E50)</name>
    <dbReference type="NCBI Taxonomy" id="226186"/>
    <lineage>
        <taxon>Bacteria</taxon>
        <taxon>Pseudomonadati</taxon>
        <taxon>Bacteroidota</taxon>
        <taxon>Bacteroidia</taxon>
        <taxon>Bacteroidales</taxon>
        <taxon>Bacteroidaceae</taxon>
        <taxon>Bacteroides</taxon>
    </lineage>
</organism>